<reference key="1">
    <citation type="journal article" date="1999" name="Nature">
        <title>Sequence and analysis of chromosome 4 of the plant Arabidopsis thaliana.</title>
        <authorList>
            <person name="Mayer K.F.X."/>
            <person name="Schueller C."/>
            <person name="Wambutt R."/>
            <person name="Murphy G."/>
            <person name="Volckaert G."/>
            <person name="Pohl T."/>
            <person name="Duesterhoeft A."/>
            <person name="Stiekema W."/>
            <person name="Entian K.-D."/>
            <person name="Terryn N."/>
            <person name="Harris B."/>
            <person name="Ansorge W."/>
            <person name="Brandt P."/>
            <person name="Grivell L.A."/>
            <person name="Rieger M."/>
            <person name="Weichselgartner M."/>
            <person name="de Simone V."/>
            <person name="Obermaier B."/>
            <person name="Mache R."/>
            <person name="Mueller M."/>
            <person name="Kreis M."/>
            <person name="Delseny M."/>
            <person name="Puigdomenech P."/>
            <person name="Watson M."/>
            <person name="Schmidtheini T."/>
            <person name="Reichert B."/>
            <person name="Portetelle D."/>
            <person name="Perez-Alonso M."/>
            <person name="Boutry M."/>
            <person name="Bancroft I."/>
            <person name="Vos P."/>
            <person name="Hoheisel J."/>
            <person name="Zimmermann W."/>
            <person name="Wedler H."/>
            <person name="Ridley P."/>
            <person name="Langham S.-A."/>
            <person name="McCullagh B."/>
            <person name="Bilham L."/>
            <person name="Robben J."/>
            <person name="van der Schueren J."/>
            <person name="Grymonprez B."/>
            <person name="Chuang Y.-J."/>
            <person name="Vandenbussche F."/>
            <person name="Braeken M."/>
            <person name="Weltjens I."/>
            <person name="Voet M."/>
            <person name="Bastiaens I."/>
            <person name="Aert R."/>
            <person name="Defoor E."/>
            <person name="Weitzenegger T."/>
            <person name="Bothe G."/>
            <person name="Ramsperger U."/>
            <person name="Hilbert H."/>
            <person name="Braun M."/>
            <person name="Holzer E."/>
            <person name="Brandt A."/>
            <person name="Peters S."/>
            <person name="van Staveren M."/>
            <person name="Dirkse W."/>
            <person name="Mooijman P."/>
            <person name="Klein Lankhorst R."/>
            <person name="Rose M."/>
            <person name="Hauf J."/>
            <person name="Koetter P."/>
            <person name="Berneiser S."/>
            <person name="Hempel S."/>
            <person name="Feldpausch M."/>
            <person name="Lamberth S."/>
            <person name="Van den Daele H."/>
            <person name="De Keyser A."/>
            <person name="Buysshaert C."/>
            <person name="Gielen J."/>
            <person name="Villarroel R."/>
            <person name="De Clercq R."/>
            <person name="van Montagu M."/>
            <person name="Rogers J."/>
            <person name="Cronin A."/>
            <person name="Quail M.A."/>
            <person name="Bray-Allen S."/>
            <person name="Clark L."/>
            <person name="Doggett J."/>
            <person name="Hall S."/>
            <person name="Kay M."/>
            <person name="Lennard N."/>
            <person name="McLay K."/>
            <person name="Mayes R."/>
            <person name="Pettett A."/>
            <person name="Rajandream M.A."/>
            <person name="Lyne M."/>
            <person name="Benes V."/>
            <person name="Rechmann S."/>
            <person name="Borkova D."/>
            <person name="Bloecker H."/>
            <person name="Scharfe M."/>
            <person name="Grimm M."/>
            <person name="Loehnert T.-H."/>
            <person name="Dose S."/>
            <person name="de Haan M."/>
            <person name="Maarse A.C."/>
            <person name="Schaefer M."/>
            <person name="Mueller-Auer S."/>
            <person name="Gabel C."/>
            <person name="Fuchs M."/>
            <person name="Fartmann B."/>
            <person name="Granderath K."/>
            <person name="Dauner D."/>
            <person name="Herzl A."/>
            <person name="Neumann S."/>
            <person name="Argiriou A."/>
            <person name="Vitale D."/>
            <person name="Liguori R."/>
            <person name="Piravandi E."/>
            <person name="Massenet O."/>
            <person name="Quigley F."/>
            <person name="Clabauld G."/>
            <person name="Muendlein A."/>
            <person name="Felber R."/>
            <person name="Schnabl S."/>
            <person name="Hiller R."/>
            <person name="Schmidt W."/>
            <person name="Lecharny A."/>
            <person name="Aubourg S."/>
            <person name="Chefdor F."/>
            <person name="Cooke R."/>
            <person name="Berger C."/>
            <person name="Monfort A."/>
            <person name="Casacuberta E."/>
            <person name="Gibbons T."/>
            <person name="Weber N."/>
            <person name="Vandenbol M."/>
            <person name="Bargues M."/>
            <person name="Terol J."/>
            <person name="Torres A."/>
            <person name="Perez-Perez A."/>
            <person name="Purnelle B."/>
            <person name="Bent E."/>
            <person name="Johnson S."/>
            <person name="Tacon D."/>
            <person name="Jesse T."/>
            <person name="Heijnen L."/>
            <person name="Schwarz S."/>
            <person name="Scholler P."/>
            <person name="Heber S."/>
            <person name="Francs P."/>
            <person name="Bielke C."/>
            <person name="Frishman D."/>
            <person name="Haase D."/>
            <person name="Lemcke K."/>
            <person name="Mewes H.-W."/>
            <person name="Stocker S."/>
            <person name="Zaccaria P."/>
            <person name="Bevan M."/>
            <person name="Wilson R.K."/>
            <person name="de la Bastide M."/>
            <person name="Habermann K."/>
            <person name="Parnell L."/>
            <person name="Dedhia N."/>
            <person name="Gnoj L."/>
            <person name="Schutz K."/>
            <person name="Huang E."/>
            <person name="Spiegel L."/>
            <person name="Sekhon M."/>
            <person name="Murray J."/>
            <person name="Sheet P."/>
            <person name="Cordes M."/>
            <person name="Abu-Threideh J."/>
            <person name="Stoneking T."/>
            <person name="Kalicki J."/>
            <person name="Graves T."/>
            <person name="Harmon G."/>
            <person name="Edwards J."/>
            <person name="Latreille P."/>
            <person name="Courtney L."/>
            <person name="Cloud J."/>
            <person name="Abbott A."/>
            <person name="Scott K."/>
            <person name="Johnson D."/>
            <person name="Minx P."/>
            <person name="Bentley D."/>
            <person name="Fulton B."/>
            <person name="Miller N."/>
            <person name="Greco T."/>
            <person name="Kemp K."/>
            <person name="Kramer J."/>
            <person name="Fulton L."/>
            <person name="Mardis E."/>
            <person name="Dante M."/>
            <person name="Pepin K."/>
            <person name="Hillier L.W."/>
            <person name="Nelson J."/>
            <person name="Spieth J."/>
            <person name="Ryan E."/>
            <person name="Andrews S."/>
            <person name="Geisel C."/>
            <person name="Layman D."/>
            <person name="Du H."/>
            <person name="Ali J."/>
            <person name="Berghoff A."/>
            <person name="Jones K."/>
            <person name="Drone K."/>
            <person name="Cotton M."/>
            <person name="Joshu C."/>
            <person name="Antonoiu B."/>
            <person name="Zidanic M."/>
            <person name="Strong C."/>
            <person name="Sun H."/>
            <person name="Lamar B."/>
            <person name="Yordan C."/>
            <person name="Ma P."/>
            <person name="Zhong J."/>
            <person name="Preston R."/>
            <person name="Vil D."/>
            <person name="Shekher M."/>
            <person name="Matero A."/>
            <person name="Shah R."/>
            <person name="Swaby I.K."/>
            <person name="O'Shaughnessy A."/>
            <person name="Rodriguez M."/>
            <person name="Hoffman J."/>
            <person name="Till S."/>
            <person name="Granat S."/>
            <person name="Shohdy N."/>
            <person name="Hasegawa A."/>
            <person name="Hameed A."/>
            <person name="Lodhi M."/>
            <person name="Johnson A."/>
            <person name="Chen E."/>
            <person name="Marra M.A."/>
            <person name="Martienssen R."/>
            <person name="McCombie W.R."/>
        </authorList>
    </citation>
    <scope>NUCLEOTIDE SEQUENCE [LARGE SCALE GENOMIC DNA]</scope>
    <source>
        <strain>cv. Columbia</strain>
    </source>
</reference>
<reference key="2">
    <citation type="journal article" date="2017" name="Plant J.">
        <title>Araport11: a complete reannotation of the Arabidopsis thaliana reference genome.</title>
        <authorList>
            <person name="Cheng C.Y."/>
            <person name="Krishnakumar V."/>
            <person name="Chan A.P."/>
            <person name="Thibaud-Nissen F."/>
            <person name="Schobel S."/>
            <person name="Town C.D."/>
        </authorList>
    </citation>
    <scope>GENOME REANNOTATION</scope>
    <source>
        <strain>cv. Columbia</strain>
    </source>
</reference>
<sequence length="1329" mass="145927">MQSDSGLPPKTYSGVKFALVGFNPIHGNSLRSKLVSGGGVDVGQFTQSCTHLIVDKLLYDDPICVAARNSGKVVVTGSWVDHSFDIGMLDNANSILYRPLRDLNGIPGSKALVVCLTGYQGHDREDIMRMVELMGGQFSKPLVANRVTHLICYKFEGEKYELAKRIKRIKLVNHRWLEDCLKNWKLLPEVDYEISGYELDIMEASARDSEDEAEDASVKPANTSPLGLRVGAVPAVEISKPGGKDFPLEEGSSLCNTSKDNWLTPKRTDRPFEAMVSTDLGVAQQHNYVSPIRVANKTPEQGMSKMETDGSTSINRSIRRHSSLATYSRKTLQRSPETDTLGKESSGQNRSLRMDDKGLKASSAFNTSASKSGSSMERTSLFRDLGKIDMLHGEEFPPMMPQAKFTDGSVSRKDSLRVHHNSEASIPPPSSLLLQELRPSSPNDNLRPVMSISDPTESEEAGHKSPTSELNTKLLSSNVVPMVDALSTAENIISNCAWDEIPEKSLTERMTENVLLQEQRSGSPKQNLSVVPNLREAAHELDLSDSAARLFNSGVVPMEADIRTPENSTMKGALDEVPERSVTDPVMRRSSTSPGSGLIRMKDKQETELTTKKTAPKKSLGTRGRKKNPINQKGSIYLSEPSPTDERNVCLNKGKVSAPVTGNSNQKEISSPVLNTEVVQDMAKHIDTETEALQGIDSVDNKSLAPEEKDHLVLDLMVNQDKLQAKTPEAADAEVEITVLERELNDVPTEDPSDGALQSEVDKNTSKRKREAGVGKNSLQRGKKGSSFTAKVGKSRVKKTKISRKENDIKANGTLMKDGGDNSADGKENLALEHENGKVSSGGDQSLVAGETLTRKEAATKDPSYAAAQLEVDTKKGKRRKQATVEENRLQTPSVKKAKVSKKEDGAKANNTVKKDIWIHSAEVKENVAVDENCGDVSSDGAQSLVVEKSLAKKEAAAKDPSNAAMQLEFDDNKCKHGKEGIVERSSLQSGKKGSSSRVEVGKSSVKKTKKSEKGSGTEATDTVMKDVGDNSAKEKENIAVDNESRKVGSGGDQSPVARKKVAKSAKTGTKAEKESKQLRVNPLASRKVFQDQEHEPKFFIVSGPRSQRNEYQQIIRRLKGKCCRDSHQWSYQATHFIAPEIRRTEKFFAAAASGSWILKTDYVADSKEAGKLLQEEPYEWHSSGLSADGAINLESPKKWRLVREKTGHGALYGLRIVVYGDCTIPCLDTLKRAVKAGDGTILATAPPYTRFLNQNTDFALISPGMPRDDVWIQEFIRHEIPCVLSDYLVEYVCKPGYALDKHVLYNTNSWAEKSFNKMQLRADLCVYH</sequence>
<proteinExistence type="predicted"/>
<dbReference type="EMBL" id="AF001308">
    <property type="protein sequence ID" value="AAC78713.1"/>
    <property type="status" value="ALT_SEQ"/>
    <property type="molecule type" value="Genomic_DNA"/>
</dbReference>
<dbReference type="EMBL" id="AL161493">
    <property type="protein sequence ID" value="CAB80704.1"/>
    <property type="status" value="ALT_SEQ"/>
    <property type="molecule type" value="Genomic_DNA"/>
</dbReference>
<dbReference type="EMBL" id="CP002687">
    <property type="protein sequence ID" value="AEE82125.1"/>
    <property type="molecule type" value="Genomic_DNA"/>
</dbReference>
<dbReference type="PIR" id="T01512">
    <property type="entry name" value="T01512"/>
</dbReference>
<dbReference type="RefSeq" id="NP_192120.4">
    <property type="nucleotide sequence ID" value="NM_116443.6"/>
</dbReference>
<dbReference type="SMR" id="O04251"/>
<dbReference type="FunCoup" id="O04251">
    <property type="interactions" value="43"/>
</dbReference>
<dbReference type="STRING" id="3702.O04251"/>
<dbReference type="iPTMnet" id="O04251"/>
<dbReference type="PaxDb" id="3702-AT4G02110.1"/>
<dbReference type="ProteomicsDB" id="243061"/>
<dbReference type="EnsemblPlants" id="AT4G02110.1">
    <property type="protein sequence ID" value="AT4G02110.1"/>
    <property type="gene ID" value="AT4G02110"/>
</dbReference>
<dbReference type="GeneID" id="828135"/>
<dbReference type="Gramene" id="AT4G02110.1">
    <property type="protein sequence ID" value="AT4G02110.1"/>
    <property type="gene ID" value="AT4G02110"/>
</dbReference>
<dbReference type="KEGG" id="ath:AT4G02110"/>
<dbReference type="Araport" id="AT4G02110"/>
<dbReference type="TAIR" id="AT4G02110"/>
<dbReference type="eggNOG" id="KOG1929">
    <property type="taxonomic scope" value="Eukaryota"/>
</dbReference>
<dbReference type="HOGENOM" id="CLU_007582_0_0_1"/>
<dbReference type="InParanoid" id="O04251"/>
<dbReference type="OMA" id="DSHNWSY"/>
<dbReference type="OrthoDB" id="1935339at2759"/>
<dbReference type="PRO" id="PR:O04251"/>
<dbReference type="Proteomes" id="UP000006548">
    <property type="component" value="Chromosome 4"/>
</dbReference>
<dbReference type="ExpressionAtlas" id="O04251">
    <property type="expression patterns" value="baseline and differential"/>
</dbReference>
<dbReference type="CDD" id="cd17711">
    <property type="entry name" value="BRCT_PAXIP1_rpt3"/>
    <property type="match status" value="1"/>
</dbReference>
<dbReference type="CDD" id="cd17730">
    <property type="entry name" value="BRCT_PAXIP1_rpt4"/>
    <property type="match status" value="1"/>
</dbReference>
<dbReference type="CDD" id="cd17738">
    <property type="entry name" value="BRCT_TopBP1_rpt7"/>
    <property type="match status" value="1"/>
</dbReference>
<dbReference type="Gene3D" id="3.40.50.10190">
    <property type="entry name" value="BRCT domain"/>
    <property type="match status" value="4"/>
</dbReference>
<dbReference type="InterPro" id="IPR044254">
    <property type="entry name" value="At4g02110-like"/>
</dbReference>
<dbReference type="InterPro" id="IPR001357">
    <property type="entry name" value="BRCT_dom"/>
</dbReference>
<dbReference type="InterPro" id="IPR036420">
    <property type="entry name" value="BRCT_dom_sf"/>
</dbReference>
<dbReference type="PANTHER" id="PTHR47181">
    <property type="entry name" value="BRCA1 C TERMINUS DOMAIN CONTAINING PROTEIN, EXPRESSED"/>
    <property type="match status" value="1"/>
</dbReference>
<dbReference type="PANTHER" id="PTHR47181:SF2">
    <property type="entry name" value="BRCA1 C TERMINUS DOMAIN CONTAINING PROTEIN, EXPRESSED"/>
    <property type="match status" value="1"/>
</dbReference>
<dbReference type="Pfam" id="PF00533">
    <property type="entry name" value="BRCT"/>
    <property type="match status" value="1"/>
</dbReference>
<dbReference type="Pfam" id="PF12738">
    <property type="entry name" value="PTCB-BRCT"/>
    <property type="match status" value="1"/>
</dbReference>
<dbReference type="SMART" id="SM00292">
    <property type="entry name" value="BRCT"/>
    <property type="match status" value="4"/>
</dbReference>
<dbReference type="SUPFAM" id="SSF52113">
    <property type="entry name" value="BRCT domain"/>
    <property type="match status" value="3"/>
</dbReference>
<dbReference type="PROSITE" id="PS50172">
    <property type="entry name" value="BRCT"/>
    <property type="match status" value="2"/>
</dbReference>
<comment type="sequence caution" evidence="3">
    <conflict type="erroneous gene model prediction">
        <sequence resource="EMBL-CDS" id="AAC78713"/>
    </conflict>
</comment>
<comment type="sequence caution" evidence="3">
    <conflict type="erroneous gene model prediction">
        <sequence resource="EMBL-CDS" id="CAB80704"/>
    </conflict>
</comment>
<name>Y4211_ARATH</name>
<organism>
    <name type="scientific">Arabidopsis thaliana</name>
    <name type="common">Mouse-ear cress</name>
    <dbReference type="NCBI Taxonomy" id="3702"/>
    <lineage>
        <taxon>Eukaryota</taxon>
        <taxon>Viridiplantae</taxon>
        <taxon>Streptophyta</taxon>
        <taxon>Embryophyta</taxon>
        <taxon>Tracheophyta</taxon>
        <taxon>Spermatophyta</taxon>
        <taxon>Magnoliopsida</taxon>
        <taxon>eudicotyledons</taxon>
        <taxon>Gunneridae</taxon>
        <taxon>Pentapetalae</taxon>
        <taxon>rosids</taxon>
        <taxon>malvids</taxon>
        <taxon>Brassicales</taxon>
        <taxon>Brassicaceae</taxon>
        <taxon>Camelineae</taxon>
        <taxon>Arabidopsis</taxon>
    </lineage>
</organism>
<accession>O04251</accession>
<accession>F4JH81</accession>
<keyword id="KW-1185">Reference proteome</keyword>
<keyword id="KW-0677">Repeat</keyword>
<protein>
    <recommendedName>
        <fullName>BRCT domain-containing protein At4g02110</fullName>
    </recommendedName>
</protein>
<feature type="chain" id="PRO_0000326465" description="BRCT domain-containing protein At4g02110">
    <location>
        <begin position="1"/>
        <end position="1329"/>
    </location>
</feature>
<feature type="domain" description="BRCT 1" evidence="1">
    <location>
        <begin position="7"/>
        <end position="97"/>
    </location>
</feature>
<feature type="domain" description="BRCT 2" evidence="1">
    <location>
        <begin position="104"/>
        <end position="194"/>
    </location>
</feature>
<feature type="domain" description="BRCT 3" evidence="1">
    <location>
        <begin position="1090"/>
        <end position="1181"/>
    </location>
</feature>
<feature type="region of interest" description="Disordered" evidence="2">
    <location>
        <begin position="295"/>
        <end position="378"/>
    </location>
</feature>
<feature type="region of interest" description="Disordered" evidence="2">
    <location>
        <begin position="393"/>
        <end position="470"/>
    </location>
</feature>
<feature type="region of interest" description="Disordered" evidence="2">
    <location>
        <begin position="576"/>
        <end position="645"/>
    </location>
</feature>
<feature type="region of interest" description="Disordered" evidence="2">
    <location>
        <begin position="745"/>
        <end position="827"/>
    </location>
</feature>
<feature type="region of interest" description="Disordered" evidence="2">
    <location>
        <begin position="952"/>
        <end position="1077"/>
    </location>
</feature>
<feature type="compositionally biased region" description="Polar residues" evidence="2">
    <location>
        <begin position="323"/>
        <end position="335"/>
    </location>
</feature>
<feature type="compositionally biased region" description="Polar residues" evidence="2">
    <location>
        <begin position="363"/>
        <end position="378"/>
    </location>
</feature>
<feature type="compositionally biased region" description="Basic and acidic residues" evidence="2">
    <location>
        <begin position="410"/>
        <end position="422"/>
    </location>
</feature>
<feature type="compositionally biased region" description="Basic and acidic residues" evidence="2">
    <location>
        <begin position="600"/>
        <end position="611"/>
    </location>
</feature>
<feature type="compositionally biased region" description="Basic residues" evidence="2">
    <location>
        <begin position="793"/>
        <end position="802"/>
    </location>
</feature>
<feature type="compositionally biased region" description="Basic and acidic residues" evidence="2">
    <location>
        <begin position="818"/>
        <end position="827"/>
    </location>
</feature>
<feature type="compositionally biased region" description="Basic and acidic residues" evidence="2">
    <location>
        <begin position="971"/>
        <end position="983"/>
    </location>
</feature>
<feature type="compositionally biased region" description="Low complexity" evidence="2">
    <location>
        <begin position="986"/>
        <end position="1004"/>
    </location>
</feature>
<feature type="compositionally biased region" description="Basic and acidic residues" evidence="2">
    <location>
        <begin position="1024"/>
        <end position="1047"/>
    </location>
</feature>
<gene>
    <name type="ordered locus">At4g02110</name>
    <name type="ORF">T10M13.12</name>
</gene>
<evidence type="ECO:0000255" key="1">
    <source>
        <dbReference type="PROSITE-ProRule" id="PRU00033"/>
    </source>
</evidence>
<evidence type="ECO:0000256" key="2">
    <source>
        <dbReference type="SAM" id="MobiDB-lite"/>
    </source>
</evidence>
<evidence type="ECO:0000305" key="3"/>